<reference key="1">
    <citation type="submission" date="2006-09" db="EMBL/GenBank/DDBJ databases">
        <authorList>
            <consortium name="The Klebsiella pneumonia Genome Sequencing Project"/>
            <person name="McClelland M."/>
            <person name="Sanderson E.K."/>
            <person name="Spieth J."/>
            <person name="Clifton W.S."/>
            <person name="Latreille P."/>
            <person name="Sabo A."/>
            <person name="Pepin K."/>
            <person name="Bhonagiri V."/>
            <person name="Porwollik S."/>
            <person name="Ali J."/>
            <person name="Wilson R.K."/>
        </authorList>
    </citation>
    <scope>NUCLEOTIDE SEQUENCE [LARGE SCALE GENOMIC DNA]</scope>
    <source>
        <strain>ATCC 700721 / MGH 78578</strain>
    </source>
</reference>
<organism>
    <name type="scientific">Klebsiella pneumoniae subsp. pneumoniae (strain ATCC 700721 / MGH 78578)</name>
    <dbReference type="NCBI Taxonomy" id="272620"/>
    <lineage>
        <taxon>Bacteria</taxon>
        <taxon>Pseudomonadati</taxon>
        <taxon>Pseudomonadota</taxon>
        <taxon>Gammaproteobacteria</taxon>
        <taxon>Enterobacterales</taxon>
        <taxon>Enterobacteriaceae</taxon>
        <taxon>Klebsiella/Raoultella group</taxon>
        <taxon>Klebsiella</taxon>
        <taxon>Klebsiella pneumoniae complex</taxon>
    </lineage>
</organism>
<name>SPEE_KLEP7</name>
<protein>
    <recommendedName>
        <fullName evidence="1">Polyamine aminopropyltransferase</fullName>
    </recommendedName>
    <alternativeName>
        <fullName evidence="1">Putrescine aminopropyltransferase</fullName>
        <shortName evidence="1">PAPT</shortName>
    </alternativeName>
    <alternativeName>
        <fullName evidence="1">Spermidine synthase</fullName>
        <shortName evidence="1">SPDS</shortName>
        <shortName evidence="1">SPDSY</shortName>
        <ecNumber evidence="1">2.5.1.16</ecNumber>
    </alternativeName>
</protein>
<sequence length="286" mass="32194">MADNPLWHETLHDHFGQYFSVDNVLYHEKTDHQDLIIFDNRAFGRVMALDGVVQTTERDEFIYHEMMTHVPLLAHGNAKHVLIIGGGDGAMLREVSRHRSIETITMVEIDAGVVSFCRQYLPNHNAGAYDDPRFTLVIDDGVNFVNQTTQTFDVIISDCTDPIGPGESLFTSAFYEGCKRCLNPGGIFVAQNGVCFLQQDEAVGSHRKLSHYFRDVSFYQAAIPTYYGGIMTFAWASDNEALRHLSSEIIQARFHKANLTCRYYNPAIHTAAFALPQYLHDALSAP</sequence>
<proteinExistence type="inferred from homology"/>
<comment type="function">
    <text evidence="1">Catalyzes the irreversible transfer of a propylamine group from the amino donor S-adenosylmethioninamine (decarboxy-AdoMet) to putrescine (1,4-diaminobutane) to yield spermidine.</text>
</comment>
<comment type="catalytic activity">
    <reaction evidence="1">
        <text>S-adenosyl 3-(methylsulfanyl)propylamine + putrescine = S-methyl-5'-thioadenosine + spermidine + H(+)</text>
        <dbReference type="Rhea" id="RHEA:12721"/>
        <dbReference type="ChEBI" id="CHEBI:15378"/>
        <dbReference type="ChEBI" id="CHEBI:17509"/>
        <dbReference type="ChEBI" id="CHEBI:57443"/>
        <dbReference type="ChEBI" id="CHEBI:57834"/>
        <dbReference type="ChEBI" id="CHEBI:326268"/>
        <dbReference type="EC" id="2.5.1.16"/>
    </reaction>
</comment>
<comment type="pathway">
    <text evidence="1">Amine and polyamine biosynthesis; spermidine biosynthesis; spermidine from putrescine: step 1/1.</text>
</comment>
<comment type="subunit">
    <text evidence="1">Homodimer or homotetramer.</text>
</comment>
<comment type="subcellular location">
    <subcellularLocation>
        <location evidence="1">Cytoplasm</location>
    </subcellularLocation>
</comment>
<comment type="similarity">
    <text evidence="1">Belongs to the spermidine/spermine synthase family.</text>
</comment>
<evidence type="ECO:0000255" key="1">
    <source>
        <dbReference type="HAMAP-Rule" id="MF_00198"/>
    </source>
</evidence>
<gene>
    <name evidence="1" type="primary">speE</name>
    <name type="ordered locus">KPN78578_01260</name>
    <name type="ORF">KPN_00127</name>
</gene>
<accession>A6T4R6</accession>
<feature type="chain" id="PRO_1000012003" description="Polyamine aminopropyltransferase">
    <location>
        <begin position="1"/>
        <end position="286"/>
    </location>
</feature>
<feature type="domain" description="PABS" evidence="1">
    <location>
        <begin position="5"/>
        <end position="238"/>
    </location>
</feature>
<feature type="active site" description="Proton acceptor" evidence="1">
    <location>
        <position position="158"/>
    </location>
</feature>
<feature type="binding site" evidence="1">
    <location>
        <position position="33"/>
    </location>
    <ligand>
        <name>S-methyl-5'-thioadenosine</name>
        <dbReference type="ChEBI" id="CHEBI:17509"/>
    </ligand>
</feature>
<feature type="binding site" evidence="1">
    <location>
        <position position="64"/>
    </location>
    <ligand>
        <name>spermidine</name>
        <dbReference type="ChEBI" id="CHEBI:57834"/>
    </ligand>
</feature>
<feature type="binding site" evidence="1">
    <location>
        <position position="88"/>
    </location>
    <ligand>
        <name>spermidine</name>
        <dbReference type="ChEBI" id="CHEBI:57834"/>
    </ligand>
</feature>
<feature type="binding site" evidence="1">
    <location>
        <position position="108"/>
    </location>
    <ligand>
        <name>S-methyl-5'-thioadenosine</name>
        <dbReference type="ChEBI" id="CHEBI:17509"/>
    </ligand>
</feature>
<feature type="binding site" evidence="1">
    <location>
        <begin position="140"/>
        <end position="141"/>
    </location>
    <ligand>
        <name>S-methyl-5'-thioadenosine</name>
        <dbReference type="ChEBI" id="CHEBI:17509"/>
    </ligand>
</feature>
<feature type="binding site" evidence="1">
    <location>
        <begin position="158"/>
        <end position="161"/>
    </location>
    <ligand>
        <name>spermidine</name>
        <dbReference type="ChEBI" id="CHEBI:57834"/>
    </ligand>
</feature>
<feature type="binding site" evidence="1">
    <location>
        <position position="165"/>
    </location>
    <ligand>
        <name>S-methyl-5'-thioadenosine</name>
        <dbReference type="ChEBI" id="CHEBI:17509"/>
    </ligand>
</feature>
<keyword id="KW-0963">Cytoplasm</keyword>
<keyword id="KW-0620">Polyamine biosynthesis</keyword>
<keyword id="KW-0745">Spermidine biosynthesis</keyword>
<keyword id="KW-0808">Transferase</keyword>
<dbReference type="EC" id="2.5.1.16" evidence="1"/>
<dbReference type="EMBL" id="CP000647">
    <property type="protein sequence ID" value="ABR75587.1"/>
    <property type="molecule type" value="Genomic_DNA"/>
</dbReference>
<dbReference type="RefSeq" id="WP_002888741.1">
    <property type="nucleotide sequence ID" value="NC_009648.1"/>
</dbReference>
<dbReference type="SMR" id="A6T4R6"/>
<dbReference type="STRING" id="272620.KPN_00127"/>
<dbReference type="jPOST" id="A6T4R6"/>
<dbReference type="PaxDb" id="272620-KPN_00127"/>
<dbReference type="EnsemblBacteria" id="ABR75587">
    <property type="protein sequence ID" value="ABR75587"/>
    <property type="gene ID" value="KPN_00127"/>
</dbReference>
<dbReference type="KEGG" id="kpn:KPN_00127"/>
<dbReference type="HOGENOM" id="CLU_048199_0_0_6"/>
<dbReference type="UniPathway" id="UPA00248">
    <property type="reaction ID" value="UER00314"/>
</dbReference>
<dbReference type="Proteomes" id="UP000000265">
    <property type="component" value="Chromosome"/>
</dbReference>
<dbReference type="GO" id="GO:0005829">
    <property type="term" value="C:cytosol"/>
    <property type="evidence" value="ECO:0007669"/>
    <property type="project" value="TreeGrafter"/>
</dbReference>
<dbReference type="GO" id="GO:0004766">
    <property type="term" value="F:spermidine synthase activity"/>
    <property type="evidence" value="ECO:0007669"/>
    <property type="project" value="UniProtKB-UniRule"/>
</dbReference>
<dbReference type="GO" id="GO:0008295">
    <property type="term" value="P:spermidine biosynthetic process"/>
    <property type="evidence" value="ECO:0007669"/>
    <property type="project" value="UniProtKB-UniRule"/>
</dbReference>
<dbReference type="CDD" id="cd02440">
    <property type="entry name" value="AdoMet_MTases"/>
    <property type="match status" value="1"/>
</dbReference>
<dbReference type="FunFam" id="2.30.140.10:FF:000002">
    <property type="entry name" value="Polyamine aminopropyltransferase"/>
    <property type="match status" value="1"/>
</dbReference>
<dbReference type="FunFam" id="3.40.50.150:FF:000026">
    <property type="entry name" value="Polyamine aminopropyltransferase"/>
    <property type="match status" value="1"/>
</dbReference>
<dbReference type="Gene3D" id="2.30.140.10">
    <property type="entry name" value="Spermidine synthase, tetramerisation domain"/>
    <property type="match status" value="1"/>
</dbReference>
<dbReference type="Gene3D" id="3.40.50.150">
    <property type="entry name" value="Vaccinia Virus protein VP39"/>
    <property type="match status" value="1"/>
</dbReference>
<dbReference type="HAMAP" id="MF_00198">
    <property type="entry name" value="Spermidine_synth"/>
    <property type="match status" value="1"/>
</dbReference>
<dbReference type="InterPro" id="IPR030374">
    <property type="entry name" value="PABS"/>
</dbReference>
<dbReference type="InterPro" id="IPR030373">
    <property type="entry name" value="PABS_CS"/>
</dbReference>
<dbReference type="InterPro" id="IPR029063">
    <property type="entry name" value="SAM-dependent_MTases_sf"/>
</dbReference>
<dbReference type="InterPro" id="IPR001045">
    <property type="entry name" value="Spermi_synthase"/>
</dbReference>
<dbReference type="InterPro" id="IPR035246">
    <property type="entry name" value="Spermidine_synt_N"/>
</dbReference>
<dbReference type="InterPro" id="IPR037163">
    <property type="entry name" value="Spermidine_synt_N_sf"/>
</dbReference>
<dbReference type="NCBIfam" id="NF037959">
    <property type="entry name" value="MFS_SpdSyn"/>
    <property type="match status" value="1"/>
</dbReference>
<dbReference type="NCBIfam" id="NF002010">
    <property type="entry name" value="PRK00811.1"/>
    <property type="match status" value="1"/>
</dbReference>
<dbReference type="NCBIfam" id="TIGR00417">
    <property type="entry name" value="speE"/>
    <property type="match status" value="1"/>
</dbReference>
<dbReference type="PANTHER" id="PTHR11558:SF11">
    <property type="entry name" value="SPERMIDINE SYNTHASE"/>
    <property type="match status" value="1"/>
</dbReference>
<dbReference type="PANTHER" id="PTHR11558">
    <property type="entry name" value="SPERMIDINE/SPERMINE SYNTHASE"/>
    <property type="match status" value="1"/>
</dbReference>
<dbReference type="Pfam" id="PF17284">
    <property type="entry name" value="Spermine_synt_N"/>
    <property type="match status" value="1"/>
</dbReference>
<dbReference type="Pfam" id="PF01564">
    <property type="entry name" value="Spermine_synth"/>
    <property type="match status" value="1"/>
</dbReference>
<dbReference type="SUPFAM" id="SSF53335">
    <property type="entry name" value="S-adenosyl-L-methionine-dependent methyltransferases"/>
    <property type="match status" value="1"/>
</dbReference>
<dbReference type="PROSITE" id="PS01330">
    <property type="entry name" value="PABS_1"/>
    <property type="match status" value="1"/>
</dbReference>
<dbReference type="PROSITE" id="PS51006">
    <property type="entry name" value="PABS_2"/>
    <property type="match status" value="1"/>
</dbReference>